<sequence length="1153" mass="132481">MPELAVMDLGRQLCVKMKKQRKAEMTIPTAMKGLEIHFYLADTHQLEFFKACYTAEDLCVEAAKRCRISPLCHNLFALYEESQDLWYAPNHVFKVTDETSIKLHYRMRFYFTNWHGTSEIESPVWRHTLSKQKSVLNSQKTTEGTPLLDAASLDYLFAQGQYDFLRGLSPVRPTQTDEEHHEIENECLGMAVLAITHHAKSNNLPLSGAGAETSYKRFIPDSLNRTIKQRNFLTRIRISNVFKNFLNEFNSKTIQDSNIGLYDLKVKYLSTLETLTQGVGREIFKPKNLKVTGESEGSPAQMLPLGDNGMGYEVQVYGTTGISWRRKPAPNQLILKDKPKSKKIKGDKQWNDKKKDSGWTLFSDFHEITHIVIKDCCVTIYRQDNKTMELDLFYRDAALSFAALVDGYFRLTVDAHHYLCTDVAPSSVVQNLENGCHGPICTEYAIHKLRQEGNEEGTYVLRWSCTEYNFIIMTVVCIELDLCESRPVPQYKNFQIETSPQGYRLYGTDTFRPTLKELLEHLQGQLLRTDNLRFQLRRCCPPQPREISNLLVMTTDREPVPQKKTQVSQLSFDRILKEEIVQGEHLGRGTRTNIYAGILKPKSDDEDDLGGYSQEVKVVLKVLGSGHRDISLAFFETASMMRQISHKHTALLYGVCVRHQENIMVEEFVQYGPLDLFMRRQTTPLSTAWKFQVAKQLASALSYLEDKKMVHGYVCSKNILVARDGLDGEGGPFIKLSDPGIPITVLSREECVDRIPWIAPECVKDTANLTIAADKWSFGTTLWEICYNGEIPLKDKKLSEKERFYAAQCQLATPDCDELAKLMTHCMTYDPRQRLFFRAIVRDIVMVEKQNPSIQPVPMLEVDPTVFEKRFLKKIRDLGEGHFGKVELCRYDPRGDRTGELVAVKSLKPENREEQSNNLWREIHILRELYHENIVKYKGICNEEGGRSIKLIMEFLPAGSLKEYLPRNKAHINLKTLHNYSVQICQGMDYLGSRNYIHRDLAARNVLVENEGTVKIGDFGLTKSIKDNEGYYTVKDDLDSPVFWYAPECLIHCKFYRASDVWSFGVTMYELLTYCDASCSPMSVFLKLIGPTHGQMTVTRLVKVLEEGKRLPRPDDCSEQLYNLMRRCWEATPEKRIDFKSLIANFQQMLDNL</sequence>
<reference key="1">
    <citation type="journal article" date="1997" name="Proc. Natl. Acad. Sci. U.S.A.">
        <title>Jak1 kinase is required for cell migrations and anterior specification in zebrafish embryos.</title>
        <authorList>
            <person name="Conway G."/>
            <person name="Margoliath A."/>
            <person name="Wong-Madden S."/>
            <person name="Roberts R.J."/>
            <person name="Gilbert W."/>
        </authorList>
    </citation>
    <scope>NUCLEOTIDE SEQUENCE [MRNA]</scope>
    <scope>DEVELOPMENTAL STAGE</scope>
    <scope>MUTAGENESIS OF LYS-905</scope>
    <scope>FUNCTION</scope>
    <source>
        <tissue>Embryo</tissue>
    </source>
</reference>
<reference key="2">
    <citation type="journal article" date="1999" name="Blood">
        <title>Gene duplication of zebrafish JAK2 homologs is accompanied by divergent embryonic expression patterns: only jak2a is expressed during erythropoiesis.</title>
        <authorList>
            <person name="Oates A.C."/>
            <person name="Brownlie A."/>
            <person name="Pratt S.J."/>
            <person name="Irvine D.V."/>
            <person name="Liao E.C."/>
            <person name="Paw B.H."/>
            <person name="Dorian K.J."/>
            <person name="Johnson S.L."/>
            <person name="Postlethwait J.H."/>
            <person name="Zon L.I."/>
            <person name="Wilks A.F."/>
        </authorList>
    </citation>
    <scope>NUCLEOTIDE SEQUENCE [MRNA] OF 443-1153</scope>
    <source>
        <tissue>Embryo</tissue>
    </source>
</reference>
<organism>
    <name type="scientific">Danio rerio</name>
    <name type="common">Zebrafish</name>
    <name type="synonym">Brachydanio rerio</name>
    <dbReference type="NCBI Taxonomy" id="7955"/>
    <lineage>
        <taxon>Eukaryota</taxon>
        <taxon>Metazoa</taxon>
        <taxon>Chordata</taxon>
        <taxon>Craniata</taxon>
        <taxon>Vertebrata</taxon>
        <taxon>Euteleostomi</taxon>
        <taxon>Actinopterygii</taxon>
        <taxon>Neopterygii</taxon>
        <taxon>Teleostei</taxon>
        <taxon>Ostariophysi</taxon>
        <taxon>Cypriniformes</taxon>
        <taxon>Danionidae</taxon>
        <taxon>Danioninae</taxon>
        <taxon>Danio</taxon>
    </lineage>
</organism>
<dbReference type="EC" id="2.7.10.2"/>
<dbReference type="EMBL" id="U82980">
    <property type="protein sequence ID" value="AAB54114.1"/>
    <property type="molecule type" value="mRNA"/>
</dbReference>
<dbReference type="EMBL" id="AJ005689">
    <property type="protein sequence ID" value="CAA06673.1"/>
    <property type="molecule type" value="mRNA"/>
</dbReference>
<dbReference type="SMR" id="O12990"/>
<dbReference type="FunCoup" id="O12990">
    <property type="interactions" value="1114"/>
</dbReference>
<dbReference type="STRING" id="7955.ENSDARP00000037399"/>
<dbReference type="PaxDb" id="7955-ENSDARP00000037399"/>
<dbReference type="AGR" id="ZFIN:ZDB-GENE-980526-142"/>
<dbReference type="ZFIN" id="ZDB-GENE-980526-142">
    <property type="gene designation" value="jak1"/>
</dbReference>
<dbReference type="eggNOG" id="KOG0197">
    <property type="taxonomic scope" value="Eukaryota"/>
</dbReference>
<dbReference type="InParanoid" id="O12990"/>
<dbReference type="BRENDA" id="2.7.10.2">
    <property type="organism ID" value="928"/>
</dbReference>
<dbReference type="Reactome" id="R-DRE-1059683">
    <property type="pathway name" value="Interleukin-6 signaling"/>
</dbReference>
<dbReference type="Reactome" id="R-DRE-110056">
    <property type="pathway name" value="MAPK3 (ERK1) activation"/>
</dbReference>
<dbReference type="Reactome" id="R-DRE-112411">
    <property type="pathway name" value="MAPK1 (ERK2) activation"/>
</dbReference>
<dbReference type="Reactome" id="R-DRE-6783783">
    <property type="pathway name" value="Interleukin-10 signaling"/>
</dbReference>
<dbReference type="Reactome" id="R-DRE-6788467">
    <property type="pathway name" value="IL-6-type cytokine receptor ligand interactions"/>
</dbReference>
<dbReference type="Reactome" id="R-DRE-877300">
    <property type="pathway name" value="Interferon gamma signaling"/>
</dbReference>
<dbReference type="Reactome" id="R-DRE-877312">
    <property type="pathway name" value="Regulation of IFNG signaling"/>
</dbReference>
<dbReference type="Reactome" id="R-DRE-8854691">
    <property type="pathway name" value="Interleukin-20 family signaling"/>
</dbReference>
<dbReference type="Reactome" id="R-DRE-8985947">
    <property type="pathway name" value="Interleukin-9 signaling"/>
</dbReference>
<dbReference type="Reactome" id="R-DRE-9020958">
    <property type="pathway name" value="Interleukin-21 signaling"/>
</dbReference>
<dbReference type="SignaLink" id="O12990"/>
<dbReference type="ChiTaRS" id="jak1">
    <property type="organism name" value="zebrafish"/>
</dbReference>
<dbReference type="PRO" id="PR:O12990"/>
<dbReference type="Proteomes" id="UP000000437">
    <property type="component" value="Unplaced"/>
</dbReference>
<dbReference type="GO" id="GO:0005856">
    <property type="term" value="C:cytoskeleton"/>
    <property type="evidence" value="ECO:0007669"/>
    <property type="project" value="InterPro"/>
</dbReference>
<dbReference type="GO" id="GO:0005829">
    <property type="term" value="C:cytosol"/>
    <property type="evidence" value="ECO:0000318"/>
    <property type="project" value="GO_Central"/>
</dbReference>
<dbReference type="GO" id="GO:0012505">
    <property type="term" value="C:endomembrane system"/>
    <property type="evidence" value="ECO:0007669"/>
    <property type="project" value="UniProtKB-SubCell"/>
</dbReference>
<dbReference type="GO" id="GO:0016020">
    <property type="term" value="C:membrane"/>
    <property type="evidence" value="ECO:0007669"/>
    <property type="project" value="UniProtKB-KW"/>
</dbReference>
<dbReference type="GO" id="GO:0005524">
    <property type="term" value="F:ATP binding"/>
    <property type="evidence" value="ECO:0007669"/>
    <property type="project" value="UniProtKB-KW"/>
</dbReference>
<dbReference type="GO" id="GO:0005131">
    <property type="term" value="F:growth hormone receptor binding"/>
    <property type="evidence" value="ECO:0000318"/>
    <property type="project" value="GO_Central"/>
</dbReference>
<dbReference type="GO" id="GO:0046872">
    <property type="term" value="F:metal ion binding"/>
    <property type="evidence" value="ECO:0007669"/>
    <property type="project" value="UniProtKB-KW"/>
</dbReference>
<dbReference type="GO" id="GO:0004715">
    <property type="term" value="F:non-membrane spanning protein tyrosine kinase activity"/>
    <property type="evidence" value="ECO:0000318"/>
    <property type="project" value="GO_Central"/>
</dbReference>
<dbReference type="GO" id="GO:0030154">
    <property type="term" value="P:cell differentiation"/>
    <property type="evidence" value="ECO:0000318"/>
    <property type="project" value="GO_Central"/>
</dbReference>
<dbReference type="GO" id="GO:0007259">
    <property type="term" value="P:cell surface receptor signaling pathway via JAK-STAT"/>
    <property type="evidence" value="ECO:0000250"/>
    <property type="project" value="UniProtKB"/>
</dbReference>
<dbReference type="GO" id="GO:0019221">
    <property type="term" value="P:cytokine-mediated signaling pathway"/>
    <property type="evidence" value="ECO:0000318"/>
    <property type="project" value="GO_Central"/>
</dbReference>
<dbReference type="GO" id="GO:0060397">
    <property type="term" value="P:growth hormone receptor signaling pathway via JAK-STAT"/>
    <property type="evidence" value="ECO:0000318"/>
    <property type="project" value="GO_Central"/>
</dbReference>
<dbReference type="GO" id="GO:0035556">
    <property type="term" value="P:intracellular signal transduction"/>
    <property type="evidence" value="ECO:0000318"/>
    <property type="project" value="GO_Central"/>
</dbReference>
<dbReference type="GO" id="GO:0006468">
    <property type="term" value="P:protein phosphorylation"/>
    <property type="evidence" value="ECO:0000250"/>
    <property type="project" value="UniProtKB"/>
</dbReference>
<dbReference type="GO" id="GO:0033077">
    <property type="term" value="P:T cell differentiation in thymus"/>
    <property type="evidence" value="ECO:0000315"/>
    <property type="project" value="ZFIN"/>
</dbReference>
<dbReference type="CDD" id="cd14473">
    <property type="entry name" value="FERM_B-lobe"/>
    <property type="match status" value="1"/>
</dbReference>
<dbReference type="CDD" id="cd13332">
    <property type="entry name" value="FERM_C_JAK1"/>
    <property type="match status" value="1"/>
</dbReference>
<dbReference type="CDD" id="cd05077">
    <property type="entry name" value="PTK_Jak1_rpt1"/>
    <property type="match status" value="1"/>
</dbReference>
<dbReference type="CDD" id="cd10378">
    <property type="entry name" value="SH2_Jak1"/>
    <property type="match status" value="1"/>
</dbReference>
<dbReference type="FunFam" id="1.10.510.10:FF:000110">
    <property type="entry name" value="Tyrosine-protein kinase"/>
    <property type="match status" value="1"/>
</dbReference>
<dbReference type="FunFam" id="3.30.200.20:FF:000135">
    <property type="entry name" value="Tyrosine-protein kinase"/>
    <property type="match status" value="1"/>
</dbReference>
<dbReference type="FunFam" id="3.30.200.20:FF:000293">
    <property type="entry name" value="Tyrosine-protein kinase"/>
    <property type="match status" value="1"/>
</dbReference>
<dbReference type="FunFam" id="1.10.510.10:FF:000114">
    <property type="entry name" value="Tyrosine-protein kinase JAK2"/>
    <property type="match status" value="1"/>
</dbReference>
<dbReference type="Gene3D" id="3.30.200.20">
    <property type="entry name" value="Phosphorylase Kinase, domain 1"/>
    <property type="match status" value="2"/>
</dbReference>
<dbReference type="Gene3D" id="3.30.505.10">
    <property type="entry name" value="SH2 domain"/>
    <property type="match status" value="1"/>
</dbReference>
<dbReference type="Gene3D" id="1.10.510.10">
    <property type="entry name" value="Transferase(Phosphotransferase) domain 1"/>
    <property type="match status" value="2"/>
</dbReference>
<dbReference type="InterPro" id="IPR019749">
    <property type="entry name" value="Band_41_domain"/>
</dbReference>
<dbReference type="InterPro" id="IPR035963">
    <property type="entry name" value="FERM_2"/>
</dbReference>
<dbReference type="InterPro" id="IPR019748">
    <property type="entry name" value="FERM_central"/>
</dbReference>
<dbReference type="InterPro" id="IPR000299">
    <property type="entry name" value="FERM_domain"/>
</dbReference>
<dbReference type="InterPro" id="IPR041155">
    <property type="entry name" value="FERM_F1"/>
</dbReference>
<dbReference type="InterPro" id="IPR041046">
    <property type="entry name" value="FERM_F2"/>
</dbReference>
<dbReference type="InterPro" id="IPR051286">
    <property type="entry name" value="JAK"/>
</dbReference>
<dbReference type="InterPro" id="IPR041381">
    <property type="entry name" value="JAK1-3/TYK2_PHL_dom"/>
</dbReference>
<dbReference type="InterPro" id="IPR011009">
    <property type="entry name" value="Kinase-like_dom_sf"/>
</dbReference>
<dbReference type="InterPro" id="IPR000719">
    <property type="entry name" value="Prot_kinase_dom"/>
</dbReference>
<dbReference type="InterPro" id="IPR017441">
    <property type="entry name" value="Protein_kinase_ATP_BS"/>
</dbReference>
<dbReference type="InterPro" id="IPR001245">
    <property type="entry name" value="Ser-Thr/Tyr_kinase_cat_dom"/>
</dbReference>
<dbReference type="InterPro" id="IPR000980">
    <property type="entry name" value="SH2"/>
</dbReference>
<dbReference type="InterPro" id="IPR036860">
    <property type="entry name" value="SH2_dom_sf"/>
</dbReference>
<dbReference type="InterPro" id="IPR008266">
    <property type="entry name" value="Tyr_kinase_AS"/>
</dbReference>
<dbReference type="InterPro" id="IPR020635">
    <property type="entry name" value="Tyr_kinase_cat_dom"/>
</dbReference>
<dbReference type="InterPro" id="IPR016251">
    <property type="entry name" value="Tyr_kinase_non-rcpt_Jak/Tyk2"/>
</dbReference>
<dbReference type="InterPro" id="IPR020776">
    <property type="entry name" value="Tyr_kinase_non-rcpt_Jak1"/>
</dbReference>
<dbReference type="PANTHER" id="PTHR45807">
    <property type="entry name" value="TYROSINE-PROTEIN KINASE HOPSCOTCH"/>
    <property type="match status" value="1"/>
</dbReference>
<dbReference type="PANTHER" id="PTHR45807:SF5">
    <property type="entry name" value="TYROSINE-PROTEIN KINASE JAK1"/>
    <property type="match status" value="1"/>
</dbReference>
<dbReference type="Pfam" id="PF18379">
    <property type="entry name" value="FERM_F1"/>
    <property type="match status" value="1"/>
</dbReference>
<dbReference type="Pfam" id="PF18377">
    <property type="entry name" value="FERM_F2"/>
    <property type="match status" value="1"/>
</dbReference>
<dbReference type="Pfam" id="PF17887">
    <property type="entry name" value="Jak1_Phl"/>
    <property type="match status" value="1"/>
</dbReference>
<dbReference type="Pfam" id="PF07714">
    <property type="entry name" value="PK_Tyr_Ser-Thr"/>
    <property type="match status" value="2"/>
</dbReference>
<dbReference type="Pfam" id="PF21990">
    <property type="entry name" value="SH2_1"/>
    <property type="match status" value="1"/>
</dbReference>
<dbReference type="PIRSF" id="PIRSF000636">
    <property type="entry name" value="TyrPK_Jak"/>
    <property type="match status" value="1"/>
</dbReference>
<dbReference type="PRINTS" id="PR01823">
    <property type="entry name" value="JANUSKINASE"/>
</dbReference>
<dbReference type="PRINTS" id="PR01824">
    <property type="entry name" value="JANUSKINASE1"/>
</dbReference>
<dbReference type="PRINTS" id="PR00109">
    <property type="entry name" value="TYRKINASE"/>
</dbReference>
<dbReference type="SMART" id="SM00295">
    <property type="entry name" value="B41"/>
    <property type="match status" value="1"/>
</dbReference>
<dbReference type="SMART" id="SM00252">
    <property type="entry name" value="SH2"/>
    <property type="match status" value="1"/>
</dbReference>
<dbReference type="SMART" id="SM00219">
    <property type="entry name" value="TyrKc"/>
    <property type="match status" value="2"/>
</dbReference>
<dbReference type="SUPFAM" id="SSF50729">
    <property type="entry name" value="PH domain-like"/>
    <property type="match status" value="1"/>
</dbReference>
<dbReference type="SUPFAM" id="SSF56112">
    <property type="entry name" value="Protein kinase-like (PK-like)"/>
    <property type="match status" value="2"/>
</dbReference>
<dbReference type="SUPFAM" id="SSF47031">
    <property type="entry name" value="Second domain of FERM"/>
    <property type="match status" value="1"/>
</dbReference>
<dbReference type="SUPFAM" id="SSF55550">
    <property type="entry name" value="SH2 domain"/>
    <property type="match status" value="1"/>
</dbReference>
<dbReference type="PROSITE" id="PS50057">
    <property type="entry name" value="FERM_3"/>
    <property type="match status" value="1"/>
</dbReference>
<dbReference type="PROSITE" id="PS00107">
    <property type="entry name" value="PROTEIN_KINASE_ATP"/>
    <property type="match status" value="1"/>
</dbReference>
<dbReference type="PROSITE" id="PS50011">
    <property type="entry name" value="PROTEIN_KINASE_DOM"/>
    <property type="match status" value="2"/>
</dbReference>
<dbReference type="PROSITE" id="PS00109">
    <property type="entry name" value="PROTEIN_KINASE_TYR"/>
    <property type="match status" value="1"/>
</dbReference>
<evidence type="ECO:0000250" key="1"/>
<evidence type="ECO:0000250" key="2">
    <source>
        <dbReference type="UniProtKB" id="P23458"/>
    </source>
</evidence>
<evidence type="ECO:0000255" key="3">
    <source>
        <dbReference type="PROSITE-ProRule" id="PRU00084"/>
    </source>
</evidence>
<evidence type="ECO:0000255" key="4">
    <source>
        <dbReference type="PROSITE-ProRule" id="PRU00159"/>
    </source>
</evidence>
<evidence type="ECO:0000255" key="5">
    <source>
        <dbReference type="PROSITE-ProRule" id="PRU10028"/>
    </source>
</evidence>
<evidence type="ECO:0000269" key="6">
    <source>
    </source>
</evidence>
<evidence type="ECO:0000305" key="7"/>
<accession>O12990</accession>
<accession>O73880</accession>
<gene>
    <name type="primary">jak1</name>
</gene>
<feature type="chain" id="PRO_0000088110" description="Tyrosine-protein kinase JAK1">
    <location>
        <begin position="1"/>
        <end position="1153"/>
    </location>
</feature>
<feature type="domain" description="FERM" evidence="3">
    <location>
        <begin position="32"/>
        <end position="416"/>
    </location>
</feature>
<feature type="domain" description="SH2; atypical">
    <location>
        <begin position="435"/>
        <end position="540"/>
    </location>
</feature>
<feature type="domain" description="Protein kinase 1" evidence="4">
    <location>
        <begin position="580"/>
        <end position="846"/>
    </location>
</feature>
<feature type="domain" description="Protein kinase 2" evidence="4">
    <location>
        <begin position="872"/>
        <end position="1150"/>
    </location>
</feature>
<feature type="active site" description="Proton acceptor" evidence="4 5">
    <location>
        <position position="1000"/>
    </location>
</feature>
<feature type="binding site" evidence="4">
    <location>
        <begin position="878"/>
        <end position="886"/>
    </location>
    <ligand>
        <name>ATP</name>
        <dbReference type="ChEBI" id="CHEBI:30616"/>
    </ligand>
</feature>
<feature type="binding site">
    <location>
        <position position="905"/>
    </location>
    <ligand>
        <name>ATP</name>
        <dbReference type="ChEBI" id="CHEBI:30616"/>
    </ligand>
</feature>
<feature type="modified residue" description="Phosphotyrosine; by autocatalysis" evidence="1">
    <location>
        <position position="1031"/>
    </location>
</feature>
<feature type="modified residue" description="Phosphotyrosine; by autocatalysis" evidence="1">
    <location>
        <position position="1032"/>
    </location>
</feature>
<feature type="mutagenesis site" description="Loss of autophosphorylation and defects in early development." evidence="6">
    <original>K</original>
    <variation>E</variation>
    <location>
        <position position="905"/>
    </location>
</feature>
<feature type="sequence conflict" description="In Ref. 2; CAA06673." evidence="7" ref="2">
    <original>T</original>
    <variation>I</variation>
    <location>
        <position position="649"/>
    </location>
</feature>
<feature type="sequence conflict" description="In Ref. 2; CAA06673." evidence="7" ref="2">
    <original>T</original>
    <variation>S</variation>
    <location>
        <position position="770"/>
    </location>
</feature>
<feature type="sequence conflict" description="In Ref. 2; CAA06673." evidence="7" ref="2">
    <original>S</original>
    <variation>T</variation>
    <location>
        <position position="799"/>
    </location>
</feature>
<feature type="sequence conflict" description="In Ref. 2; CAA06673." evidence="7" ref="2">
    <original>H</original>
    <variation>L</variation>
    <location>
        <position position="978"/>
    </location>
</feature>
<feature type="sequence conflict" description="In Ref. 2; CAA06673." evidence="7" ref="2">
    <original>L</original>
    <variation>I</variation>
    <location>
        <position position="1111"/>
    </location>
</feature>
<name>JAK1_DANRE</name>
<keyword id="KW-0067">ATP-binding</keyword>
<keyword id="KW-0217">Developmental protein</keyword>
<keyword id="KW-0418">Kinase</keyword>
<keyword id="KW-0460">Magnesium</keyword>
<keyword id="KW-0472">Membrane</keyword>
<keyword id="KW-0479">Metal-binding</keyword>
<keyword id="KW-0547">Nucleotide-binding</keyword>
<keyword id="KW-0597">Phosphoprotein</keyword>
<keyword id="KW-1185">Reference proteome</keyword>
<keyword id="KW-0677">Repeat</keyword>
<keyword id="KW-0727">SH2 domain</keyword>
<keyword id="KW-0808">Transferase</keyword>
<keyword id="KW-0829">Tyrosine-protein kinase</keyword>
<protein>
    <recommendedName>
        <fullName>Tyrosine-protein kinase JAK1</fullName>
        <ecNumber>2.7.10.2</ecNumber>
    </recommendedName>
    <alternativeName>
        <fullName>Janus kinase 1</fullName>
        <shortName>JAK-1</shortName>
    </alternativeName>
</protein>
<proteinExistence type="evidence at protein level"/>
<comment type="function">
    <text evidence="2 6">Tyrosine kinase of the non-receptor type, involved in the IFN-alpha/beta/gamma signal pathway (By similarity). Appears to be required in early development for specific cell migrations (epiboly), expression of homeobox protein goosecoid and formation of anterior structures (PubMed:9096349).</text>
</comment>
<comment type="catalytic activity">
    <reaction evidence="5">
        <text>L-tyrosyl-[protein] + ATP = O-phospho-L-tyrosyl-[protein] + ADP + H(+)</text>
        <dbReference type="Rhea" id="RHEA:10596"/>
        <dbReference type="Rhea" id="RHEA-COMP:10136"/>
        <dbReference type="Rhea" id="RHEA-COMP:20101"/>
        <dbReference type="ChEBI" id="CHEBI:15378"/>
        <dbReference type="ChEBI" id="CHEBI:30616"/>
        <dbReference type="ChEBI" id="CHEBI:46858"/>
        <dbReference type="ChEBI" id="CHEBI:61978"/>
        <dbReference type="ChEBI" id="CHEBI:456216"/>
        <dbReference type="EC" id="2.7.10.2"/>
    </reaction>
</comment>
<comment type="cofactor">
    <cofactor evidence="2">
        <name>Mg(2+)</name>
        <dbReference type="ChEBI" id="CHEBI:18420"/>
    </cofactor>
    <text evidence="2">Mn(2+) was used in the in vitro kinase assay but Mg(2+) is likely to be the in vivo cofactor.</text>
</comment>
<comment type="subcellular location">
    <subcellularLocation>
        <location evidence="1">Endomembrane system</location>
        <topology evidence="1">Peripheral membrane protein</topology>
    </subcellularLocation>
    <text evidence="1">Wholly intracellular, possibly membrane associated.</text>
</comment>
<comment type="developmental stage">
    <text evidence="6">Present in the unfertilized egg through to the blastula stage where it is distributed uniformly. Levels drop rapidly at four hours development, remain very low until 10 hours, then gradually increase from 12 hours with a rapid increase at 48 hours. At 48 hours it is concentrated in the region of the gill arches. Also present in the adult.</text>
</comment>
<comment type="domain">
    <text>Possesses two phosphotransferase domains. The second one probably contains the catalytic domain, while the presence of slight differences suggest a different role for domain 1.</text>
</comment>
<comment type="domain">
    <text evidence="2">The protein kinase 1 domain is also called the pseudokinase domain and has a regulatory role through the transactivation of other JAK kinases associated with signaling receptors.</text>
</comment>
<comment type="domain">
    <text evidence="2">The protein kinase 2 domain is the catalytically active domain.</text>
</comment>
<comment type="similarity">
    <text evidence="4">Belongs to the protein kinase superfamily. Tyr protein kinase family. JAK subfamily.</text>
</comment>